<comment type="function">
    <text evidence="2">Component of the ubiquinol-cytochrome c reductase complex (complex III or cytochrome b-c1 complex) that is part of the mitochondrial respiratory chain. The b-c1 complex mediates electron transfer from ubiquinol to cytochrome c. Contributes to the generation of a proton gradient across the mitochondrial membrane that is then used for ATP synthesis.</text>
</comment>
<comment type="cofactor">
    <cofactor evidence="2">
        <name>heme b</name>
        <dbReference type="ChEBI" id="CHEBI:60344"/>
    </cofactor>
    <text evidence="2">Binds 2 heme b groups non-covalently.</text>
</comment>
<comment type="subunit">
    <text evidence="2">The cytochrome bc1 complex contains 11 subunits: 3 respiratory subunits (MT-CYB, CYC1 and UQCRFS1), 2 core proteins (UQCRC1 and UQCRC2) and 6 low-molecular weight proteins (UQCRH/QCR6, UQCRB/QCR7, UQCRQ/QCR8, UQCR10/QCR9, UQCR11/QCR10 and a cleavage product of UQCRFS1). This cytochrome bc1 complex then forms a dimer.</text>
</comment>
<comment type="subcellular location">
    <subcellularLocation>
        <location evidence="2">Mitochondrion inner membrane</location>
        <topology evidence="2">Multi-pass membrane protein</topology>
    </subcellularLocation>
</comment>
<comment type="miscellaneous">
    <text evidence="1">Heme 1 (or BL or b562) is low-potential and absorbs at about 562 nm, and heme 2 (or BH or b566) is high-potential and absorbs at about 566 nm.</text>
</comment>
<comment type="similarity">
    <text evidence="3 4">Belongs to the cytochrome b family.</text>
</comment>
<comment type="caution">
    <text evidence="2">The full-length protein contains only eight transmembrane helices, not nine as predicted by bioinformatics tools.</text>
</comment>
<gene>
    <name type="primary">MT-CYB</name>
    <name type="synonym">COB</name>
    <name type="synonym">CYTB</name>
    <name type="synonym">MTCYB</name>
</gene>
<evidence type="ECO:0000250" key="1"/>
<evidence type="ECO:0000250" key="2">
    <source>
        <dbReference type="UniProtKB" id="P00157"/>
    </source>
</evidence>
<evidence type="ECO:0000255" key="3">
    <source>
        <dbReference type="PROSITE-ProRule" id="PRU00967"/>
    </source>
</evidence>
<evidence type="ECO:0000255" key="4">
    <source>
        <dbReference type="PROSITE-ProRule" id="PRU00968"/>
    </source>
</evidence>
<dbReference type="EMBL" id="AF084099">
    <property type="protein sequence ID" value="AAD54476.1"/>
    <property type="molecule type" value="Genomic_DNA"/>
</dbReference>
<dbReference type="EMBL" id="AF084098">
    <property type="protein sequence ID" value="AAD54475.1"/>
    <property type="molecule type" value="Genomic_DNA"/>
</dbReference>
<dbReference type="SMR" id="Q9TDJ6"/>
<dbReference type="GO" id="GO:0005743">
    <property type="term" value="C:mitochondrial inner membrane"/>
    <property type="evidence" value="ECO:0007669"/>
    <property type="project" value="UniProtKB-SubCell"/>
</dbReference>
<dbReference type="GO" id="GO:0045275">
    <property type="term" value="C:respiratory chain complex III"/>
    <property type="evidence" value="ECO:0007669"/>
    <property type="project" value="InterPro"/>
</dbReference>
<dbReference type="GO" id="GO:0046872">
    <property type="term" value="F:metal ion binding"/>
    <property type="evidence" value="ECO:0007669"/>
    <property type="project" value="UniProtKB-KW"/>
</dbReference>
<dbReference type="GO" id="GO:0008121">
    <property type="term" value="F:ubiquinol-cytochrome-c reductase activity"/>
    <property type="evidence" value="ECO:0007669"/>
    <property type="project" value="InterPro"/>
</dbReference>
<dbReference type="GO" id="GO:0006122">
    <property type="term" value="P:mitochondrial electron transport, ubiquinol to cytochrome c"/>
    <property type="evidence" value="ECO:0007669"/>
    <property type="project" value="TreeGrafter"/>
</dbReference>
<dbReference type="CDD" id="cd00290">
    <property type="entry name" value="cytochrome_b_C"/>
    <property type="match status" value="1"/>
</dbReference>
<dbReference type="CDD" id="cd00284">
    <property type="entry name" value="Cytochrome_b_N"/>
    <property type="match status" value="1"/>
</dbReference>
<dbReference type="FunFam" id="1.20.810.10:FF:000002">
    <property type="entry name" value="Cytochrome b"/>
    <property type="match status" value="1"/>
</dbReference>
<dbReference type="Gene3D" id="1.20.810.10">
    <property type="entry name" value="Cytochrome Bc1 Complex, Chain C"/>
    <property type="match status" value="1"/>
</dbReference>
<dbReference type="InterPro" id="IPR005798">
    <property type="entry name" value="Cyt_b/b6_C"/>
</dbReference>
<dbReference type="InterPro" id="IPR036150">
    <property type="entry name" value="Cyt_b/b6_C_sf"/>
</dbReference>
<dbReference type="InterPro" id="IPR005797">
    <property type="entry name" value="Cyt_b/b6_N"/>
</dbReference>
<dbReference type="InterPro" id="IPR027387">
    <property type="entry name" value="Cytb/b6-like_sf"/>
</dbReference>
<dbReference type="InterPro" id="IPR030689">
    <property type="entry name" value="Cytochrome_b"/>
</dbReference>
<dbReference type="InterPro" id="IPR048260">
    <property type="entry name" value="Cytochrome_b_C_euk/bac"/>
</dbReference>
<dbReference type="InterPro" id="IPR048259">
    <property type="entry name" value="Cytochrome_b_N_euk/bac"/>
</dbReference>
<dbReference type="InterPro" id="IPR016174">
    <property type="entry name" value="Di-haem_cyt_TM"/>
</dbReference>
<dbReference type="PANTHER" id="PTHR19271">
    <property type="entry name" value="CYTOCHROME B"/>
    <property type="match status" value="1"/>
</dbReference>
<dbReference type="PANTHER" id="PTHR19271:SF16">
    <property type="entry name" value="CYTOCHROME B"/>
    <property type="match status" value="1"/>
</dbReference>
<dbReference type="Pfam" id="PF00032">
    <property type="entry name" value="Cytochrom_B_C"/>
    <property type="match status" value="1"/>
</dbReference>
<dbReference type="Pfam" id="PF00033">
    <property type="entry name" value="Cytochrome_B"/>
    <property type="match status" value="1"/>
</dbReference>
<dbReference type="PIRSF" id="PIRSF038885">
    <property type="entry name" value="COB"/>
    <property type="match status" value="1"/>
</dbReference>
<dbReference type="SUPFAM" id="SSF81648">
    <property type="entry name" value="a domain/subunit of cytochrome bc1 complex (Ubiquinol-cytochrome c reductase)"/>
    <property type="match status" value="1"/>
</dbReference>
<dbReference type="SUPFAM" id="SSF81342">
    <property type="entry name" value="Transmembrane di-heme cytochromes"/>
    <property type="match status" value="1"/>
</dbReference>
<dbReference type="PROSITE" id="PS51003">
    <property type="entry name" value="CYTB_CTER"/>
    <property type="match status" value="1"/>
</dbReference>
<dbReference type="PROSITE" id="PS51002">
    <property type="entry name" value="CYTB_NTER"/>
    <property type="match status" value="1"/>
</dbReference>
<feature type="chain" id="PRO_0000061081" description="Cytochrome b">
    <location>
        <begin position="1"/>
        <end position="379"/>
    </location>
</feature>
<feature type="transmembrane region" description="Helical" evidence="2">
    <location>
        <begin position="33"/>
        <end position="53"/>
    </location>
</feature>
<feature type="transmembrane region" description="Helical" evidence="2">
    <location>
        <begin position="77"/>
        <end position="98"/>
    </location>
</feature>
<feature type="transmembrane region" description="Helical" evidence="2">
    <location>
        <begin position="113"/>
        <end position="133"/>
    </location>
</feature>
<feature type="transmembrane region" description="Helical" evidence="2">
    <location>
        <begin position="178"/>
        <end position="198"/>
    </location>
</feature>
<feature type="transmembrane region" description="Helical" evidence="2">
    <location>
        <begin position="226"/>
        <end position="246"/>
    </location>
</feature>
<feature type="transmembrane region" description="Helical" evidence="2">
    <location>
        <begin position="288"/>
        <end position="308"/>
    </location>
</feature>
<feature type="transmembrane region" description="Helical" evidence="2">
    <location>
        <begin position="320"/>
        <end position="340"/>
    </location>
</feature>
<feature type="transmembrane region" description="Helical" evidence="2">
    <location>
        <begin position="347"/>
        <end position="367"/>
    </location>
</feature>
<feature type="binding site" description="axial binding residue" evidence="2">
    <location>
        <position position="83"/>
    </location>
    <ligand>
        <name>heme b</name>
        <dbReference type="ChEBI" id="CHEBI:60344"/>
        <label>b562</label>
    </ligand>
    <ligandPart>
        <name>Fe</name>
        <dbReference type="ChEBI" id="CHEBI:18248"/>
    </ligandPart>
</feature>
<feature type="binding site" description="axial binding residue" evidence="2">
    <location>
        <position position="97"/>
    </location>
    <ligand>
        <name>heme b</name>
        <dbReference type="ChEBI" id="CHEBI:60344"/>
        <label>b566</label>
    </ligand>
    <ligandPart>
        <name>Fe</name>
        <dbReference type="ChEBI" id="CHEBI:18248"/>
    </ligandPart>
</feature>
<feature type="binding site" description="axial binding residue" evidence="2">
    <location>
        <position position="182"/>
    </location>
    <ligand>
        <name>heme b</name>
        <dbReference type="ChEBI" id="CHEBI:60344"/>
        <label>b562</label>
    </ligand>
    <ligandPart>
        <name>Fe</name>
        <dbReference type="ChEBI" id="CHEBI:18248"/>
    </ligandPart>
</feature>
<feature type="binding site" description="axial binding residue" evidence="2">
    <location>
        <position position="196"/>
    </location>
    <ligand>
        <name>heme b</name>
        <dbReference type="ChEBI" id="CHEBI:60344"/>
        <label>b566</label>
    </ligand>
    <ligandPart>
        <name>Fe</name>
        <dbReference type="ChEBI" id="CHEBI:18248"/>
    </ligandPart>
</feature>
<feature type="binding site" evidence="2">
    <location>
        <position position="201"/>
    </location>
    <ligand>
        <name>a ubiquinone</name>
        <dbReference type="ChEBI" id="CHEBI:16389"/>
    </ligand>
</feature>
<feature type="sequence variant">
    <original>V</original>
    <variation>I</variation>
    <location>
        <position position="329"/>
    </location>
</feature>
<keyword id="KW-0249">Electron transport</keyword>
<keyword id="KW-0349">Heme</keyword>
<keyword id="KW-0408">Iron</keyword>
<keyword id="KW-0472">Membrane</keyword>
<keyword id="KW-0479">Metal-binding</keyword>
<keyword id="KW-0496">Mitochondrion</keyword>
<keyword id="KW-0999">Mitochondrion inner membrane</keyword>
<keyword id="KW-0679">Respiratory chain</keyword>
<keyword id="KW-0812">Transmembrane</keyword>
<keyword id="KW-1133">Transmembrane helix</keyword>
<keyword id="KW-0813">Transport</keyword>
<keyword id="KW-0830">Ubiquinone</keyword>
<protein>
    <recommendedName>
        <fullName>Cytochrome b</fullName>
    </recommendedName>
    <alternativeName>
        <fullName>Complex III subunit 3</fullName>
    </alternativeName>
    <alternativeName>
        <fullName>Complex III subunit III</fullName>
    </alternativeName>
    <alternativeName>
        <fullName>Cytochrome b-c1 complex subunit 3</fullName>
    </alternativeName>
    <alternativeName>
        <fullName>Ubiquinol-cytochrome-c reductase complex cytochrome b subunit</fullName>
    </alternativeName>
</protein>
<accession>Q9TDJ6</accession>
<name>CYB_LAGHO</name>
<proteinExistence type="inferred from homology"/>
<sequence>MTNIRKTHPLMKILNDAFIDLPTPSNISSWWNFGSLLGLCLIMQILTGLFLAMHYTPDTSTAFSSVAHICRDVNYGWFIRYLHANGASMFFICLYAHIGRGLYYGSYMFQETWNIGVLLLLTVMATAFVGYVLPWGQMSFWGATVITNLLSAIPYIGTTLVEWIWGGFSVDKATLTRFFAFHFILPFIITALAAVHLLFLHETGSNNPTGIPSNMDMIPFHPYYTIKDILGALLLILTLLALTLFTPDLLGDPDNYTPANPLSTPAHIKPEWYFLFAYAILRSIPNKLGGVLALLLSILVLIFIPMLQTSKQRSMMFRPFSQLLFWTLVADLLTLTWIGGQPVEHPYIIVGQLASILYFLLILVLMPTAGLIENKLLKW</sequence>
<geneLocation type="mitochondrion"/>
<reference key="1">
    <citation type="journal article" date="1999" name="Mar. Mamm. Sci.">
        <title>Phylogenetic relationships among the delphinid cetaceans based on full cytochrome b sequences.</title>
        <authorList>
            <person name="LeDuc R.G."/>
            <person name="Perrin W.F."/>
            <person name="Dizon A.E."/>
        </authorList>
    </citation>
    <scope>NUCLEOTIDE SEQUENCE [GENOMIC DNA]</scope>
</reference>
<organism>
    <name type="scientific">Lagenodelphis hosei</name>
    <name type="common">Fraser's dolphin</name>
    <name type="synonym">Sarawak dolphin</name>
    <dbReference type="NCBI Taxonomy" id="103594"/>
    <lineage>
        <taxon>Eukaryota</taxon>
        <taxon>Metazoa</taxon>
        <taxon>Chordata</taxon>
        <taxon>Craniata</taxon>
        <taxon>Vertebrata</taxon>
        <taxon>Euteleostomi</taxon>
        <taxon>Mammalia</taxon>
        <taxon>Eutheria</taxon>
        <taxon>Laurasiatheria</taxon>
        <taxon>Artiodactyla</taxon>
        <taxon>Whippomorpha</taxon>
        <taxon>Cetacea</taxon>
        <taxon>Odontoceti</taxon>
        <taxon>Delphinidae</taxon>
        <taxon>Lagenodelphis</taxon>
    </lineage>
</organism>